<feature type="chain" id="PRO_1000000548" description="Argininosuccinate lyase">
    <location>
        <begin position="1"/>
        <end position="463"/>
    </location>
</feature>
<sequence>MAKNTKLWGGRFEGTVEDWVERFGASISFDQKLAKFDVIGSLAHVQMLGQTGILSLEESEKIQVGLKELLEELEAGQLDFDIANEDIHMNMEVLLTEKIGPLAGKLHTARSRNDQVATDMHLYLKEQLGYVLDKLAHLKGVLLDLAENHVATIMPGYTHLQHAQPISFAYHLMAYYNMFQRDSERFEFNQKHTDLCPLGAAALAGTTFPIDRQLSSDLLEFKQPYTNSLDAVSDRDFILEFLSNASILMMHMSRFCEEMINWCSFEYQFITLSDTFTIGSSIMPQKKNPDMAELIRGKTGRVYGHLFGLLTVMKSLPLAYNKDLQEDKEGMFDTVETILNSLDVLAGMLSSLQVNKEKMQESTEKDFSNATELADYLAGKGLPFREAHEVVGRLVLDSIKSAKNLQDWTLEELQTYHSLITEDIYVYLQPKTAVQRRNSLGGTGFDQVEYQIAVAKKANEAKK</sequence>
<evidence type="ECO:0000255" key="1">
    <source>
        <dbReference type="HAMAP-Rule" id="MF_00006"/>
    </source>
</evidence>
<organism>
    <name type="scientific">Streptococcus pneumoniae serotype 2 (strain D39 / NCTC 7466)</name>
    <dbReference type="NCBI Taxonomy" id="373153"/>
    <lineage>
        <taxon>Bacteria</taxon>
        <taxon>Bacillati</taxon>
        <taxon>Bacillota</taxon>
        <taxon>Bacilli</taxon>
        <taxon>Lactobacillales</taxon>
        <taxon>Streptococcaceae</taxon>
        <taxon>Streptococcus</taxon>
    </lineage>
</organism>
<comment type="catalytic activity">
    <reaction evidence="1">
        <text>2-(N(omega)-L-arginino)succinate = fumarate + L-arginine</text>
        <dbReference type="Rhea" id="RHEA:24020"/>
        <dbReference type="ChEBI" id="CHEBI:29806"/>
        <dbReference type="ChEBI" id="CHEBI:32682"/>
        <dbReference type="ChEBI" id="CHEBI:57472"/>
        <dbReference type="EC" id="4.3.2.1"/>
    </reaction>
</comment>
<comment type="pathway">
    <text evidence="1">Amino-acid biosynthesis; L-arginine biosynthesis; L-arginine from L-ornithine and carbamoyl phosphate: step 3/3.</text>
</comment>
<comment type="subcellular location">
    <subcellularLocation>
        <location evidence="1">Cytoplasm</location>
    </subcellularLocation>
</comment>
<comment type="similarity">
    <text evidence="1">Belongs to the lyase 1 family. Argininosuccinate lyase subfamily.</text>
</comment>
<dbReference type="EC" id="4.3.2.1" evidence="1"/>
<dbReference type="EMBL" id="CP000410">
    <property type="protein sequence ID" value="ABJ55243.1"/>
    <property type="molecule type" value="Genomic_DNA"/>
</dbReference>
<dbReference type="RefSeq" id="WP_001107614.1">
    <property type="nucleotide sequence ID" value="NZ_JAMLJR010000024.1"/>
</dbReference>
<dbReference type="SMR" id="Q04MW6"/>
<dbReference type="PaxDb" id="373153-SPD_0111"/>
<dbReference type="KEGG" id="spd:SPD_0111"/>
<dbReference type="eggNOG" id="COG0165">
    <property type="taxonomic scope" value="Bacteria"/>
</dbReference>
<dbReference type="HOGENOM" id="CLU_027272_2_3_9"/>
<dbReference type="BioCyc" id="SPNE373153:G1G6V-119-MONOMER"/>
<dbReference type="UniPathway" id="UPA00068">
    <property type="reaction ID" value="UER00114"/>
</dbReference>
<dbReference type="PHI-base" id="PHI:4922"/>
<dbReference type="Proteomes" id="UP000001452">
    <property type="component" value="Chromosome"/>
</dbReference>
<dbReference type="GO" id="GO:0005829">
    <property type="term" value="C:cytosol"/>
    <property type="evidence" value="ECO:0007669"/>
    <property type="project" value="TreeGrafter"/>
</dbReference>
<dbReference type="GO" id="GO:0004056">
    <property type="term" value="F:argininosuccinate lyase activity"/>
    <property type="evidence" value="ECO:0007669"/>
    <property type="project" value="UniProtKB-UniRule"/>
</dbReference>
<dbReference type="GO" id="GO:0042450">
    <property type="term" value="P:arginine biosynthetic process via ornithine"/>
    <property type="evidence" value="ECO:0007669"/>
    <property type="project" value="InterPro"/>
</dbReference>
<dbReference type="GO" id="GO:0006526">
    <property type="term" value="P:L-arginine biosynthetic process"/>
    <property type="evidence" value="ECO:0007669"/>
    <property type="project" value="UniProtKB-UniRule"/>
</dbReference>
<dbReference type="CDD" id="cd01359">
    <property type="entry name" value="Argininosuccinate_lyase"/>
    <property type="match status" value="1"/>
</dbReference>
<dbReference type="FunFam" id="1.10.275.10:FF:000002">
    <property type="entry name" value="Argininosuccinate lyase"/>
    <property type="match status" value="1"/>
</dbReference>
<dbReference type="FunFam" id="1.10.40.30:FF:000001">
    <property type="entry name" value="Argininosuccinate lyase"/>
    <property type="match status" value="1"/>
</dbReference>
<dbReference type="FunFam" id="1.20.200.10:FF:000002">
    <property type="entry name" value="Argininosuccinate lyase"/>
    <property type="match status" value="1"/>
</dbReference>
<dbReference type="Gene3D" id="1.10.40.30">
    <property type="entry name" value="Fumarase/aspartase (C-terminal domain)"/>
    <property type="match status" value="1"/>
</dbReference>
<dbReference type="Gene3D" id="1.20.200.10">
    <property type="entry name" value="Fumarase/aspartase (Central domain)"/>
    <property type="match status" value="1"/>
</dbReference>
<dbReference type="Gene3D" id="1.10.275.10">
    <property type="entry name" value="Fumarase/aspartase (N-terminal domain)"/>
    <property type="match status" value="1"/>
</dbReference>
<dbReference type="HAMAP" id="MF_00006">
    <property type="entry name" value="Arg_succ_lyase"/>
    <property type="match status" value="1"/>
</dbReference>
<dbReference type="InterPro" id="IPR029419">
    <property type="entry name" value="Arg_succ_lyase_C"/>
</dbReference>
<dbReference type="InterPro" id="IPR009049">
    <property type="entry name" value="Argininosuccinate_lyase"/>
</dbReference>
<dbReference type="InterPro" id="IPR024083">
    <property type="entry name" value="Fumarase/histidase_N"/>
</dbReference>
<dbReference type="InterPro" id="IPR020557">
    <property type="entry name" value="Fumarate_lyase_CS"/>
</dbReference>
<dbReference type="InterPro" id="IPR000362">
    <property type="entry name" value="Fumarate_lyase_fam"/>
</dbReference>
<dbReference type="InterPro" id="IPR022761">
    <property type="entry name" value="Fumarate_lyase_N"/>
</dbReference>
<dbReference type="InterPro" id="IPR008948">
    <property type="entry name" value="L-Aspartase-like"/>
</dbReference>
<dbReference type="NCBIfam" id="TIGR00838">
    <property type="entry name" value="argH"/>
    <property type="match status" value="1"/>
</dbReference>
<dbReference type="PANTHER" id="PTHR43814">
    <property type="entry name" value="ARGININOSUCCINATE LYASE"/>
    <property type="match status" value="1"/>
</dbReference>
<dbReference type="PANTHER" id="PTHR43814:SF1">
    <property type="entry name" value="ARGININOSUCCINATE LYASE"/>
    <property type="match status" value="1"/>
</dbReference>
<dbReference type="Pfam" id="PF14698">
    <property type="entry name" value="ASL_C2"/>
    <property type="match status" value="1"/>
</dbReference>
<dbReference type="Pfam" id="PF00206">
    <property type="entry name" value="Lyase_1"/>
    <property type="match status" value="1"/>
</dbReference>
<dbReference type="PRINTS" id="PR00145">
    <property type="entry name" value="ARGSUCLYASE"/>
</dbReference>
<dbReference type="PRINTS" id="PR00149">
    <property type="entry name" value="FUMRATELYASE"/>
</dbReference>
<dbReference type="SUPFAM" id="SSF48557">
    <property type="entry name" value="L-aspartase-like"/>
    <property type="match status" value="1"/>
</dbReference>
<dbReference type="PROSITE" id="PS00163">
    <property type="entry name" value="FUMARATE_LYASES"/>
    <property type="match status" value="1"/>
</dbReference>
<protein>
    <recommendedName>
        <fullName evidence="1">Argininosuccinate lyase</fullName>
        <shortName evidence="1">ASAL</shortName>
        <ecNumber evidence="1">4.3.2.1</ecNumber>
    </recommendedName>
    <alternativeName>
        <fullName evidence="1">Arginosuccinase</fullName>
    </alternativeName>
</protein>
<name>ARLY_STRP2</name>
<reference key="1">
    <citation type="journal article" date="2007" name="J. Bacteriol.">
        <title>Genome sequence of Avery's virulent serotype 2 strain D39 of Streptococcus pneumoniae and comparison with that of unencapsulated laboratory strain R6.</title>
        <authorList>
            <person name="Lanie J.A."/>
            <person name="Ng W.-L."/>
            <person name="Kazmierczak K.M."/>
            <person name="Andrzejewski T.M."/>
            <person name="Davidsen T.M."/>
            <person name="Wayne K.J."/>
            <person name="Tettelin H."/>
            <person name="Glass J.I."/>
            <person name="Winkler M.E."/>
        </authorList>
    </citation>
    <scope>NUCLEOTIDE SEQUENCE [LARGE SCALE GENOMIC DNA]</scope>
    <source>
        <strain>D39 / NCTC 7466</strain>
    </source>
</reference>
<keyword id="KW-0028">Amino-acid biosynthesis</keyword>
<keyword id="KW-0055">Arginine biosynthesis</keyword>
<keyword id="KW-0963">Cytoplasm</keyword>
<keyword id="KW-0456">Lyase</keyword>
<keyword id="KW-1185">Reference proteome</keyword>
<accession>Q04MW6</accession>
<gene>
    <name evidence="1" type="primary">argH</name>
    <name type="ordered locus">SPD_0111</name>
</gene>
<proteinExistence type="inferred from homology"/>